<proteinExistence type="inferred from homology"/>
<accession>B4TES0</accession>
<keyword id="KW-0012">Acyltransferase</keyword>
<keyword id="KW-1003">Cell membrane</keyword>
<keyword id="KW-0472">Membrane</keyword>
<keyword id="KW-0808">Transferase</keyword>
<keyword id="KW-0812">Transmembrane</keyword>
<keyword id="KW-1133">Transmembrane helix</keyword>
<name>OPGC_SALHS</name>
<dbReference type="EC" id="2.1.-.-" evidence="1"/>
<dbReference type="EMBL" id="CP001120">
    <property type="protein sequence ID" value="ACF68532.1"/>
    <property type="molecule type" value="Genomic_DNA"/>
</dbReference>
<dbReference type="RefSeq" id="WP_000100066.1">
    <property type="nucleotide sequence ID" value="NC_011083.1"/>
</dbReference>
<dbReference type="KEGG" id="seh:SeHA_C1260"/>
<dbReference type="HOGENOM" id="CLU_036182_2_0_6"/>
<dbReference type="UniPathway" id="UPA00637"/>
<dbReference type="Proteomes" id="UP000001866">
    <property type="component" value="Chromosome"/>
</dbReference>
<dbReference type="GO" id="GO:0005886">
    <property type="term" value="C:plasma membrane"/>
    <property type="evidence" value="ECO:0007669"/>
    <property type="project" value="UniProtKB-SubCell"/>
</dbReference>
<dbReference type="GO" id="GO:0016747">
    <property type="term" value="F:acyltransferase activity, transferring groups other than amino-acyl groups"/>
    <property type="evidence" value="ECO:0007669"/>
    <property type="project" value="InterPro"/>
</dbReference>
<dbReference type="GO" id="GO:0016741">
    <property type="term" value="F:transferase activity, transferring one-carbon groups"/>
    <property type="evidence" value="ECO:0007669"/>
    <property type="project" value="UniProtKB-UniRule"/>
</dbReference>
<dbReference type="GO" id="GO:0009250">
    <property type="term" value="P:glucan biosynthetic process"/>
    <property type="evidence" value="ECO:0007669"/>
    <property type="project" value="UniProtKB-UniRule"/>
</dbReference>
<dbReference type="HAMAP" id="MF_01066">
    <property type="entry name" value="MdoC_OpgC"/>
    <property type="match status" value="1"/>
</dbReference>
<dbReference type="InterPro" id="IPR002656">
    <property type="entry name" value="Acyl_transf_3_dom"/>
</dbReference>
<dbReference type="InterPro" id="IPR050623">
    <property type="entry name" value="Glucan_succinyl_AcylTrfase"/>
</dbReference>
<dbReference type="InterPro" id="IPR023723">
    <property type="entry name" value="Glucans_biosynth_C"/>
</dbReference>
<dbReference type="NCBIfam" id="NF003014">
    <property type="entry name" value="PRK03854.1"/>
    <property type="match status" value="1"/>
</dbReference>
<dbReference type="PANTHER" id="PTHR36927">
    <property type="entry name" value="BLR4337 PROTEIN"/>
    <property type="match status" value="1"/>
</dbReference>
<dbReference type="PANTHER" id="PTHR36927:SF3">
    <property type="entry name" value="GLUCANS BIOSYNTHESIS PROTEIN C"/>
    <property type="match status" value="1"/>
</dbReference>
<dbReference type="Pfam" id="PF01757">
    <property type="entry name" value="Acyl_transf_3"/>
    <property type="match status" value="1"/>
</dbReference>
<sequence>MSSVPAPREYFLDSIRAWLMLLGIPFHISLIYSTHSWHVNSATPSWWLTLFNDFIHAFRMQVFFVISGYFSYMLFLRYPLKRWWKVRVERVGIPMLTAIPLLTLPQFILLQYVKEKTENWPTLSAYEKYNTLAWELISHLWFLLVLVILTTVSIGIFTWFQKRQETSKPRPAAISLAKLSLIFFLLGVAYAAIRRIIFIVYPAILSDGMFNFIVMQTLFYVPFFILGALAFIHPDLKARFTTPSRGCTLGAAVAFIAYLLNQRYGSGDAWMYETESVITMVMGLWMVNVVFSLGHRLLNFQSARVTYFVNASLFIYLVHHPLTLFFGAYITPHISSNLIGFLCGLIFVMGIALILYEIHLRIPLLKFLFSGKPPVKQESRAAIG</sequence>
<feature type="chain" id="PRO_1000136574" description="Glucans biosynthesis protein C">
    <location>
        <begin position="1"/>
        <end position="384"/>
    </location>
</feature>
<feature type="transmembrane region" description="Helical" evidence="1">
    <location>
        <begin position="17"/>
        <end position="37"/>
    </location>
</feature>
<feature type="transmembrane region" description="Helical" evidence="1">
    <location>
        <begin position="54"/>
        <end position="74"/>
    </location>
</feature>
<feature type="transmembrane region" description="Helical" evidence="1">
    <location>
        <begin position="91"/>
        <end position="111"/>
    </location>
</feature>
<feature type="transmembrane region" description="Helical" evidence="1">
    <location>
        <begin position="140"/>
        <end position="160"/>
    </location>
</feature>
<feature type="transmembrane region" description="Helical" evidence="1">
    <location>
        <begin position="173"/>
        <end position="193"/>
    </location>
</feature>
<feature type="transmembrane region" description="Helical" evidence="1">
    <location>
        <begin position="212"/>
        <end position="232"/>
    </location>
</feature>
<feature type="transmembrane region" description="Helical" evidence="1">
    <location>
        <begin position="240"/>
        <end position="260"/>
    </location>
</feature>
<feature type="transmembrane region" description="Helical" evidence="1">
    <location>
        <begin position="274"/>
        <end position="294"/>
    </location>
</feature>
<feature type="transmembrane region" description="Helical" evidence="1">
    <location>
        <begin position="311"/>
        <end position="331"/>
    </location>
</feature>
<feature type="transmembrane region" description="Helical" evidence="1">
    <location>
        <begin position="338"/>
        <end position="358"/>
    </location>
</feature>
<protein>
    <recommendedName>
        <fullName evidence="1">Glucans biosynthesis protein C</fullName>
        <ecNumber evidence="1">2.1.-.-</ecNumber>
    </recommendedName>
</protein>
<evidence type="ECO:0000255" key="1">
    <source>
        <dbReference type="HAMAP-Rule" id="MF_01066"/>
    </source>
</evidence>
<comment type="function">
    <text evidence="1">Necessary for the succinyl substitution of periplasmic glucans. Could catalyze the transfer of succinyl residues from the cytoplasmic side of the membrane to the nascent glucan backbones on the periplasmic side of the membrane.</text>
</comment>
<comment type="pathway">
    <text evidence="1">Glycan metabolism; osmoregulated periplasmic glucan (OPG) biosynthesis.</text>
</comment>
<comment type="subcellular location">
    <subcellularLocation>
        <location evidence="1">Cell membrane</location>
        <topology evidence="1">Multi-pass membrane protein</topology>
    </subcellularLocation>
</comment>
<comment type="similarity">
    <text evidence="1">Belongs to the acyltransferase 3 family. OpgC subfamily.</text>
</comment>
<reference key="1">
    <citation type="journal article" date="2011" name="J. Bacteriol.">
        <title>Comparative genomics of 28 Salmonella enterica isolates: evidence for CRISPR-mediated adaptive sublineage evolution.</title>
        <authorList>
            <person name="Fricke W.F."/>
            <person name="Mammel M.K."/>
            <person name="McDermott P.F."/>
            <person name="Tartera C."/>
            <person name="White D.G."/>
            <person name="Leclerc J.E."/>
            <person name="Ravel J."/>
            <person name="Cebula T.A."/>
        </authorList>
    </citation>
    <scope>NUCLEOTIDE SEQUENCE [LARGE SCALE GENOMIC DNA]</scope>
    <source>
        <strain>SL476</strain>
    </source>
</reference>
<organism>
    <name type="scientific">Salmonella heidelberg (strain SL476)</name>
    <dbReference type="NCBI Taxonomy" id="454169"/>
    <lineage>
        <taxon>Bacteria</taxon>
        <taxon>Pseudomonadati</taxon>
        <taxon>Pseudomonadota</taxon>
        <taxon>Gammaproteobacteria</taxon>
        <taxon>Enterobacterales</taxon>
        <taxon>Enterobacteriaceae</taxon>
        <taxon>Salmonella</taxon>
    </lineage>
</organism>
<gene>
    <name evidence="1" type="primary">mdoC</name>
    <name evidence="1" type="synonym">opgC</name>
    <name type="ordered locus">SeHA_C1260</name>
</gene>